<evidence type="ECO:0000250" key="1">
    <source>
        <dbReference type="UniProtKB" id="Q9D0R4"/>
    </source>
</evidence>
<evidence type="ECO:0000255" key="2">
    <source>
        <dbReference type="PROSITE-ProRule" id="PRU00541"/>
    </source>
</evidence>
<evidence type="ECO:0000255" key="3">
    <source>
        <dbReference type="PROSITE-ProRule" id="PRU00542"/>
    </source>
</evidence>
<evidence type="ECO:0000256" key="4">
    <source>
        <dbReference type="SAM" id="MobiDB-lite"/>
    </source>
</evidence>
<evidence type="ECO:0000269" key="5">
    <source>
    </source>
</evidence>
<evidence type="ECO:0000269" key="6">
    <source>
    </source>
</evidence>
<evidence type="ECO:0000269" key="7">
    <source>
    </source>
</evidence>
<evidence type="ECO:0000269" key="8">
    <source>
    </source>
</evidence>
<evidence type="ECO:0000269" key="9">
    <source>
    </source>
</evidence>
<evidence type="ECO:0000269" key="10">
    <source>
    </source>
</evidence>
<evidence type="ECO:0000269" key="11">
    <source>
    </source>
</evidence>
<evidence type="ECO:0000303" key="12">
    <source>
    </source>
</evidence>
<evidence type="ECO:0000305" key="13"/>
<evidence type="ECO:0007744" key="14">
    <source>
    </source>
</evidence>
<evidence type="ECO:0007744" key="15">
    <source>
    </source>
</evidence>
<protein>
    <recommendedName>
        <fullName>Probable ATP-dependent RNA helicase DDX56</fullName>
        <ecNumber>3.6.4.13</ecNumber>
    </recommendedName>
    <alternativeName>
        <fullName>ATP-dependent 61 kDa nucleolar RNA helicase</fullName>
    </alternativeName>
    <alternativeName>
        <fullName>DEAD box protein 21</fullName>
    </alternativeName>
    <alternativeName>
        <fullName>DEAD box protein 56</fullName>
    </alternativeName>
</protein>
<comment type="function">
    <text evidence="1 8 10">Nucleolar RNA helicase that plays a role in various biological processes including innate immunity, ribosome biogenesis or nucleolus organization (PubMed:31340999, PubMed:33789112). Plays an essential role in maintaining nucleolar integrity in planarian stem cells (PubMed:33789112). Maintains embryonic stem cells proliferation by conventional regulation of ribosome assembly and interaction with OCT4 and POU5F1 complex (By similarity). Regulates antiviral innate immunity by inhibiting the virus-triggered signaling nuclear translocation of IRF3 (PubMed:31340999). Mechanistically, acts by disrupting the interaction between IRF3 and importin IPO5 (PubMed:31340999). May play a role in later stages of the processing of the pre-ribosomal particles leading to mature 60S ribosomal subunits. Has intrinsic ATPase activity.</text>
</comment>
<comment type="function">
    <text evidence="7">(Microbial infection) Helicase activity is important for packaging viral RNA into virions during West Nile virus infection.</text>
</comment>
<comment type="function">
    <text evidence="9">(Microbial infection) Plays a positive role in foot-and-mouth disease virus replication by inhibiting the phosphorylation of IRF3 leading to inhibition of type I interferon.</text>
</comment>
<comment type="function">
    <text evidence="11">(Microbial infection) Plays a positive role in EMCV replication by interrupting IRF3 phosphorylation and its nucleus translocation.</text>
</comment>
<comment type="catalytic activity">
    <reaction>
        <text>ATP + H2O = ADP + phosphate + H(+)</text>
        <dbReference type="Rhea" id="RHEA:13065"/>
        <dbReference type="ChEBI" id="CHEBI:15377"/>
        <dbReference type="ChEBI" id="CHEBI:15378"/>
        <dbReference type="ChEBI" id="CHEBI:30616"/>
        <dbReference type="ChEBI" id="CHEBI:43474"/>
        <dbReference type="ChEBI" id="CHEBI:456216"/>
        <dbReference type="EC" id="3.6.4.13"/>
    </reaction>
</comment>
<comment type="subunit">
    <text evidence="1 8">May form homooligomeric complexes. Interacts with IRF3 (PubMed:31340999). Interacts with OCT4 and POU5F1 (By similarity).</text>
</comment>
<comment type="subunit">
    <text evidence="7">(Microbial infection) Interacts with West Nile virus capsid protein C.</text>
</comment>
<comment type="subunit">
    <text evidence="9">(Microbial infection) Interacts with foot-and-mouth disease virus protein 3A; this interaction leads to inhibition of type I interferon production.</text>
</comment>
<comment type="subunit">
    <text evidence="9">(Microbial infection) Interacts with EMCV protein 3C; this interaction leads to inhibition of type I interferon production.</text>
</comment>
<comment type="interaction">
    <interactant intactId="EBI-372376">
        <id>Q9NY93</id>
    </interactant>
    <interactant intactId="EBI-299104">
        <id>P38919</id>
        <label>EIF4A3</label>
    </interactant>
    <organismsDiffer>false</organismsDiffer>
    <experiments>3</experiments>
</comment>
<comment type="subcellular location">
    <subcellularLocation>
        <location evidence="5 7 8 10">Nucleus</location>
        <location evidence="5 7 8 10">Nucleolus</location>
    </subcellularLocation>
</comment>
<comment type="alternative products">
    <event type="alternative splicing"/>
    <isoform>
        <id>Q9NY93-1</id>
        <name>1</name>
        <sequence type="displayed"/>
    </isoform>
    <isoform>
        <id>Q9NY93-2</id>
        <name>2</name>
        <sequence type="described" ref="VSP_044869"/>
    </isoform>
</comment>
<comment type="tissue specificity">
    <text>Detected in heart, brain, liver, pancreas, placenta and lung.</text>
</comment>
<comment type="similarity">
    <text evidence="13">Belongs to the DEAD box helicase family. DDX56/DBP9 subfamily.</text>
</comment>
<organism>
    <name type="scientific">Homo sapiens</name>
    <name type="common">Human</name>
    <dbReference type="NCBI Taxonomy" id="9606"/>
    <lineage>
        <taxon>Eukaryota</taxon>
        <taxon>Metazoa</taxon>
        <taxon>Chordata</taxon>
        <taxon>Craniata</taxon>
        <taxon>Vertebrata</taxon>
        <taxon>Euteleostomi</taxon>
        <taxon>Mammalia</taxon>
        <taxon>Eutheria</taxon>
        <taxon>Euarchontoglires</taxon>
        <taxon>Primates</taxon>
        <taxon>Haplorrhini</taxon>
        <taxon>Catarrhini</taxon>
        <taxon>Hominidae</taxon>
        <taxon>Homo</taxon>
    </lineage>
</organism>
<gene>
    <name type="primary">DDX56</name>
    <name type="synonym">DDX21</name>
    <name type="synonym">NOH61</name>
</gene>
<sequence length="547" mass="61590">MEDSEALGFEHMGLDPRLLQAVTDLGWSRPTLIQEKAIPLALEGKDLLARARTGSGKTAAYAIPMLQLLLHRKATGPVVEQAVRGLVLVPTKELARQAQSMIQQLATYCARDVRVANVSAAEDSVSQRAVLMEKPDVVVGTPSRILSHLQQDSLKLRDSLELLVVDEADLLFSFGFEEELKSLLCHLPRIYQAFLMSATFNEDVQALKELILHNPVTLKLQESQLPGPDQLQQFQVVCETEEDKFLLLYALLKLSLIRGKSLLFVNTLERSYRLRLFLEQFSIPTCVLNGELPLRSRCHIISQFNQGFYDCVIATDAEVLGAPVKGKRRGRGPKGDKASDPEAGVARGIDFHHVSAVLNFDLPPTPEAYIHRAGRTARANNPGIVLTFVLPTEQFHLGKIEELLSGENRGPILLPYQFRMEEIEGFRYRCRDAMRSVTKQAIREARLKEIKEELLHSEKLKTYFEDNPRDLQLLRHDLPLHPAVVKPHLGHVPDYLVPPALRGLVRPHKKRKKLSSSCRKAKRAKSQNPLRSFKHKGKKFRPTAKPS</sequence>
<accession>Q9NY93</accession>
<accession>A4D2K9</accession>
<accession>C9JV95</accession>
<accession>Q6IAE2</accession>
<accession>Q9H9I8</accession>
<keyword id="KW-0025">Alternative splicing</keyword>
<keyword id="KW-0067">ATP-binding</keyword>
<keyword id="KW-0347">Helicase</keyword>
<keyword id="KW-0378">Hydrolase</keyword>
<keyword id="KW-0547">Nucleotide-binding</keyword>
<keyword id="KW-0539">Nucleus</keyword>
<keyword id="KW-0597">Phosphoprotein</keyword>
<keyword id="KW-1267">Proteomics identification</keyword>
<keyword id="KW-1185">Reference proteome</keyword>
<keyword id="KW-0690">Ribosome biogenesis</keyword>
<keyword id="KW-0694">RNA-binding</keyword>
<keyword id="KW-0698">rRNA processing</keyword>
<dbReference type="EC" id="3.6.4.13"/>
<dbReference type="EMBL" id="AJ131712">
    <property type="protein sequence ID" value="CAB87992.1"/>
    <property type="molecule type" value="mRNA"/>
</dbReference>
<dbReference type="EMBL" id="AF247666">
    <property type="protein sequence ID" value="AAG36876.1"/>
    <property type="molecule type" value="mRNA"/>
</dbReference>
<dbReference type="EMBL" id="AL136700">
    <property type="protein sequence ID" value="CAB66635.1"/>
    <property type="molecule type" value="mRNA"/>
</dbReference>
<dbReference type="EMBL" id="AK022774">
    <property type="protein sequence ID" value="BAB14238.1"/>
    <property type="molecule type" value="mRNA"/>
</dbReference>
<dbReference type="EMBL" id="AK315363">
    <property type="status" value="NOT_ANNOTATED_CDS"/>
    <property type="molecule type" value="mRNA"/>
</dbReference>
<dbReference type="EMBL" id="CR457213">
    <property type="protein sequence ID" value="CAG33494.1"/>
    <property type="molecule type" value="mRNA"/>
</dbReference>
<dbReference type="EMBL" id="AC004938">
    <property type="status" value="NOT_ANNOTATED_CDS"/>
    <property type="molecule type" value="Genomic_DNA"/>
</dbReference>
<dbReference type="EMBL" id="CH236960">
    <property type="protein sequence ID" value="EAL23752.1"/>
    <property type="molecule type" value="Genomic_DNA"/>
</dbReference>
<dbReference type="EMBL" id="CH471128">
    <property type="protein sequence ID" value="EAW61094.1"/>
    <property type="molecule type" value="Genomic_DNA"/>
</dbReference>
<dbReference type="EMBL" id="BC001235">
    <property type="protein sequence ID" value="AAH01235.1"/>
    <property type="molecule type" value="mRNA"/>
</dbReference>
<dbReference type="CCDS" id="CCDS5492.1">
    <molecule id="Q9NY93-1"/>
</dbReference>
<dbReference type="CCDS" id="CCDS59053.1">
    <molecule id="Q9NY93-2"/>
</dbReference>
<dbReference type="RefSeq" id="NP_001244118.1">
    <molecule id="Q9NY93-2"/>
    <property type="nucleotide sequence ID" value="NM_001257189.2"/>
</dbReference>
<dbReference type="RefSeq" id="NP_061955.1">
    <molecule id="Q9NY93-1"/>
    <property type="nucleotide sequence ID" value="NM_019082.4"/>
</dbReference>
<dbReference type="SMR" id="Q9NY93"/>
<dbReference type="BioGRID" id="120075">
    <property type="interactions" value="341"/>
</dbReference>
<dbReference type="FunCoup" id="Q9NY93">
    <property type="interactions" value="3236"/>
</dbReference>
<dbReference type="IntAct" id="Q9NY93">
    <property type="interactions" value="146"/>
</dbReference>
<dbReference type="MINT" id="Q9NY93"/>
<dbReference type="STRING" id="9606.ENSP00000258772"/>
<dbReference type="GlyGen" id="Q9NY93">
    <property type="glycosylation" value="3 sites, 1 N-linked glycan (1 site), 1 O-linked glycan (1 site)"/>
</dbReference>
<dbReference type="iPTMnet" id="Q9NY93"/>
<dbReference type="MetOSite" id="Q9NY93"/>
<dbReference type="PhosphoSitePlus" id="Q9NY93"/>
<dbReference type="SwissPalm" id="Q9NY93"/>
<dbReference type="BioMuta" id="DDX56"/>
<dbReference type="DMDM" id="20139238"/>
<dbReference type="jPOST" id="Q9NY93"/>
<dbReference type="MassIVE" id="Q9NY93"/>
<dbReference type="PaxDb" id="9606-ENSP00000258772"/>
<dbReference type="PeptideAtlas" id="Q9NY93"/>
<dbReference type="ProteomicsDB" id="11840"/>
<dbReference type="ProteomicsDB" id="83197">
    <molecule id="Q9NY93-1"/>
</dbReference>
<dbReference type="Pumba" id="Q9NY93"/>
<dbReference type="Antibodypedia" id="13419">
    <property type="antibodies" value="365 antibodies from 27 providers"/>
</dbReference>
<dbReference type="DNASU" id="54606"/>
<dbReference type="Ensembl" id="ENST00000258772.10">
    <molecule id="Q9NY93-1"/>
    <property type="protein sequence ID" value="ENSP00000258772.5"/>
    <property type="gene ID" value="ENSG00000136271.11"/>
</dbReference>
<dbReference type="Ensembl" id="ENST00000431640.5">
    <molecule id="Q9NY93-2"/>
    <property type="protein sequence ID" value="ENSP00000393488.1"/>
    <property type="gene ID" value="ENSG00000136271.11"/>
</dbReference>
<dbReference type="GeneID" id="54606"/>
<dbReference type="KEGG" id="hsa:54606"/>
<dbReference type="MANE-Select" id="ENST00000258772.10">
    <property type="protein sequence ID" value="ENSP00000258772.5"/>
    <property type="RefSeq nucleotide sequence ID" value="NM_019082.4"/>
    <property type="RefSeq protein sequence ID" value="NP_061955.1"/>
</dbReference>
<dbReference type="UCSC" id="uc003tlg.5">
    <molecule id="Q9NY93-1"/>
    <property type="organism name" value="human"/>
</dbReference>
<dbReference type="AGR" id="HGNC:18193"/>
<dbReference type="CTD" id="54606"/>
<dbReference type="DisGeNET" id="54606"/>
<dbReference type="GeneCards" id="DDX56"/>
<dbReference type="HGNC" id="HGNC:18193">
    <property type="gene designation" value="DDX56"/>
</dbReference>
<dbReference type="HPA" id="ENSG00000136271">
    <property type="expression patterns" value="Low tissue specificity"/>
</dbReference>
<dbReference type="MIM" id="608023">
    <property type="type" value="gene"/>
</dbReference>
<dbReference type="neXtProt" id="NX_Q9NY93"/>
<dbReference type="OpenTargets" id="ENSG00000136271"/>
<dbReference type="PharmGKB" id="PA134916346"/>
<dbReference type="VEuPathDB" id="HostDB:ENSG00000136271"/>
<dbReference type="eggNOG" id="KOG0346">
    <property type="taxonomic scope" value="Eukaryota"/>
</dbReference>
<dbReference type="GeneTree" id="ENSGT00550000074946"/>
<dbReference type="HOGENOM" id="CLU_003041_17_1_1"/>
<dbReference type="InParanoid" id="Q9NY93"/>
<dbReference type="OMA" id="NASEQCV"/>
<dbReference type="OrthoDB" id="1191041at2759"/>
<dbReference type="PAN-GO" id="Q9NY93">
    <property type="GO annotations" value="1 GO annotation based on evolutionary models"/>
</dbReference>
<dbReference type="PhylomeDB" id="Q9NY93"/>
<dbReference type="TreeFam" id="TF300620"/>
<dbReference type="PathwayCommons" id="Q9NY93"/>
<dbReference type="SignaLink" id="Q9NY93"/>
<dbReference type="BioGRID-ORCS" id="54606">
    <property type="hits" value="848 hits in 1169 CRISPR screens"/>
</dbReference>
<dbReference type="CD-CODE" id="91857CE7">
    <property type="entry name" value="Nucleolus"/>
</dbReference>
<dbReference type="ChiTaRS" id="DDX56">
    <property type="organism name" value="human"/>
</dbReference>
<dbReference type="GeneWiki" id="DDX56"/>
<dbReference type="GenomeRNAi" id="54606"/>
<dbReference type="Pharos" id="Q9NY93">
    <property type="development level" value="Tbio"/>
</dbReference>
<dbReference type="PRO" id="PR:Q9NY93"/>
<dbReference type="Proteomes" id="UP000005640">
    <property type="component" value="Chromosome 7"/>
</dbReference>
<dbReference type="RNAct" id="Q9NY93">
    <property type="molecule type" value="protein"/>
</dbReference>
<dbReference type="Bgee" id="ENSG00000136271">
    <property type="expression patterns" value="Expressed in lower esophagus mucosa and 197 other cell types or tissues"/>
</dbReference>
<dbReference type="ExpressionAtlas" id="Q9NY93">
    <property type="expression patterns" value="baseline and differential"/>
</dbReference>
<dbReference type="GO" id="GO:0005829">
    <property type="term" value="C:cytosol"/>
    <property type="evidence" value="ECO:0000314"/>
    <property type="project" value="FlyBase"/>
</dbReference>
<dbReference type="GO" id="GO:0016020">
    <property type="term" value="C:membrane"/>
    <property type="evidence" value="ECO:0007005"/>
    <property type="project" value="UniProtKB"/>
</dbReference>
<dbReference type="GO" id="GO:0005730">
    <property type="term" value="C:nucleolus"/>
    <property type="evidence" value="ECO:0000314"/>
    <property type="project" value="LIFEdb"/>
</dbReference>
<dbReference type="GO" id="GO:0005634">
    <property type="term" value="C:nucleus"/>
    <property type="evidence" value="ECO:0000314"/>
    <property type="project" value="UniProt"/>
</dbReference>
<dbReference type="GO" id="GO:0005524">
    <property type="term" value="F:ATP binding"/>
    <property type="evidence" value="ECO:0007669"/>
    <property type="project" value="UniProtKB-KW"/>
</dbReference>
<dbReference type="GO" id="GO:0016887">
    <property type="term" value="F:ATP hydrolysis activity"/>
    <property type="evidence" value="ECO:0007669"/>
    <property type="project" value="RHEA"/>
</dbReference>
<dbReference type="GO" id="GO:0140311">
    <property type="term" value="F:protein sequestering activity"/>
    <property type="evidence" value="ECO:0000314"/>
    <property type="project" value="UniProt"/>
</dbReference>
<dbReference type="GO" id="GO:0003723">
    <property type="term" value="F:RNA binding"/>
    <property type="evidence" value="ECO:0007005"/>
    <property type="project" value="UniProtKB"/>
</dbReference>
<dbReference type="GO" id="GO:0003724">
    <property type="term" value="F:RNA helicase activity"/>
    <property type="evidence" value="ECO:0000304"/>
    <property type="project" value="ProtInc"/>
</dbReference>
<dbReference type="GO" id="GO:0035613">
    <property type="term" value="F:RNA stem-loop binding"/>
    <property type="evidence" value="ECO:0000314"/>
    <property type="project" value="FlyBase"/>
</dbReference>
<dbReference type="GO" id="GO:0051607">
    <property type="term" value="P:defense response to virus"/>
    <property type="evidence" value="ECO:0000314"/>
    <property type="project" value="FlyBase"/>
</dbReference>
<dbReference type="GO" id="GO:0044830">
    <property type="term" value="P:modulation by host of viral RNA genome replication"/>
    <property type="evidence" value="ECO:0000315"/>
    <property type="project" value="FlyBase"/>
</dbReference>
<dbReference type="GO" id="GO:0032480">
    <property type="term" value="P:negative regulation of type I interferon production"/>
    <property type="evidence" value="ECO:0000314"/>
    <property type="project" value="UniProt"/>
</dbReference>
<dbReference type="GO" id="GO:0010976">
    <property type="term" value="P:positive regulation of neuron projection development"/>
    <property type="evidence" value="ECO:0007669"/>
    <property type="project" value="Ensembl"/>
</dbReference>
<dbReference type="GO" id="GO:0006364">
    <property type="term" value="P:rRNA processing"/>
    <property type="evidence" value="ECO:0007669"/>
    <property type="project" value="UniProtKB-KW"/>
</dbReference>
<dbReference type="CDD" id="cd17961">
    <property type="entry name" value="DEADc_DDX56"/>
    <property type="match status" value="1"/>
</dbReference>
<dbReference type="CDD" id="cd18787">
    <property type="entry name" value="SF2_C_DEAD"/>
    <property type="match status" value="1"/>
</dbReference>
<dbReference type="FunFam" id="3.40.50.300:FF:000939">
    <property type="entry name" value="Probable ATP-dependent RNA helicase DDX56"/>
    <property type="match status" value="1"/>
</dbReference>
<dbReference type="FunFam" id="3.40.50.300:FF:001046">
    <property type="entry name" value="Probable ATP-dependent RNA helicase ddx56"/>
    <property type="match status" value="1"/>
</dbReference>
<dbReference type="Gene3D" id="3.40.50.300">
    <property type="entry name" value="P-loop containing nucleotide triphosphate hydrolases"/>
    <property type="match status" value="2"/>
</dbReference>
<dbReference type="InterPro" id="IPR011545">
    <property type="entry name" value="DEAD/DEAH_box_helicase_dom"/>
</dbReference>
<dbReference type="InterPro" id="IPR050079">
    <property type="entry name" value="DEAD_box_RNA_helicase"/>
</dbReference>
<dbReference type="InterPro" id="IPR014001">
    <property type="entry name" value="Helicase_ATP-bd"/>
</dbReference>
<dbReference type="InterPro" id="IPR001650">
    <property type="entry name" value="Helicase_C-like"/>
</dbReference>
<dbReference type="InterPro" id="IPR027417">
    <property type="entry name" value="P-loop_NTPase"/>
</dbReference>
<dbReference type="InterPro" id="IPR014014">
    <property type="entry name" value="RNA_helicase_DEAD_Q_motif"/>
</dbReference>
<dbReference type="PANTHER" id="PTHR47959">
    <property type="entry name" value="ATP-DEPENDENT RNA HELICASE RHLE-RELATED"/>
    <property type="match status" value="1"/>
</dbReference>
<dbReference type="PANTHER" id="PTHR47959:SF21">
    <property type="entry name" value="DEAD-BOX HELICASE 56"/>
    <property type="match status" value="1"/>
</dbReference>
<dbReference type="Pfam" id="PF00270">
    <property type="entry name" value="DEAD"/>
    <property type="match status" value="1"/>
</dbReference>
<dbReference type="Pfam" id="PF00271">
    <property type="entry name" value="Helicase_C"/>
    <property type="match status" value="1"/>
</dbReference>
<dbReference type="SMART" id="SM00487">
    <property type="entry name" value="DEXDc"/>
    <property type="match status" value="1"/>
</dbReference>
<dbReference type="SMART" id="SM00490">
    <property type="entry name" value="HELICc"/>
    <property type="match status" value="1"/>
</dbReference>
<dbReference type="SUPFAM" id="SSF52540">
    <property type="entry name" value="P-loop containing nucleoside triphosphate hydrolases"/>
    <property type="match status" value="2"/>
</dbReference>
<dbReference type="PROSITE" id="PS51192">
    <property type="entry name" value="HELICASE_ATP_BIND_1"/>
    <property type="match status" value="1"/>
</dbReference>
<dbReference type="PROSITE" id="PS51194">
    <property type="entry name" value="HELICASE_CTER"/>
    <property type="match status" value="1"/>
</dbReference>
<dbReference type="PROSITE" id="PS51195">
    <property type="entry name" value="Q_MOTIF"/>
    <property type="match status" value="1"/>
</dbReference>
<feature type="chain" id="PRO_0000055058" description="Probable ATP-dependent RNA helicase DDX56">
    <location>
        <begin position="1"/>
        <end position="547"/>
    </location>
</feature>
<feature type="domain" description="Helicase ATP-binding" evidence="2">
    <location>
        <begin position="38"/>
        <end position="218"/>
    </location>
</feature>
<feature type="domain" description="Helicase C-terminal" evidence="3">
    <location>
        <begin position="230"/>
        <end position="424"/>
    </location>
</feature>
<feature type="region of interest" description="Disordered" evidence="4">
    <location>
        <begin position="506"/>
        <end position="547"/>
    </location>
</feature>
<feature type="short sequence motif" description="Q motif">
    <location>
        <begin position="7"/>
        <end position="35"/>
    </location>
</feature>
<feature type="short sequence motif" description="DEAD box">
    <location>
        <begin position="166"/>
        <end position="169"/>
    </location>
</feature>
<feature type="compositionally biased region" description="Basic residues" evidence="4">
    <location>
        <begin position="506"/>
        <end position="525"/>
    </location>
</feature>
<feature type="compositionally biased region" description="Basic residues" evidence="4">
    <location>
        <begin position="532"/>
        <end position="547"/>
    </location>
</feature>
<feature type="binding site" evidence="2">
    <location>
        <begin position="51"/>
        <end position="58"/>
    </location>
    <ligand>
        <name>ATP</name>
        <dbReference type="ChEBI" id="CHEBI:30616"/>
    </ligand>
</feature>
<feature type="modified residue" description="Phosphoserine" evidence="14">
    <location>
        <position position="126"/>
    </location>
</feature>
<feature type="modified residue" description="Phosphothreonine" evidence="15">
    <location>
        <position position="141"/>
    </location>
</feature>
<feature type="modified residue" description="Phosphoserine" evidence="15">
    <location>
        <position position="532"/>
    </location>
</feature>
<feature type="splice variant" id="VSP_044869" description="In isoform 2." evidence="12">
    <location>
        <begin position="298"/>
        <end position="337"/>
    </location>
</feature>
<feature type="mutagenesis site" description="Complete loss of interaction with IRF3. About 3-4 times less genomic RNA in West Nile virus particles." evidence="6 7">
    <original>D</original>
    <variation>N</variation>
    <location>
        <position position="166"/>
    </location>
</feature>
<feature type="mutagenesis site" description="Complete loss of interaction with IRF3. About 3-4 times less genomic RNA in West Nile virus particles." evidence="6 7">
    <original>E</original>
    <variation>Q</variation>
    <location>
        <position position="167"/>
    </location>
</feature>
<feature type="sequence conflict" description="In Ref. 5; CAG33494." evidence="13" ref="5">
    <original>P</original>
    <variation>S</variation>
    <location>
        <position position="30"/>
    </location>
</feature>
<feature type="sequence conflict" description="In Ref. 4; BAB14238." evidence="13" ref="4">
    <original>I</original>
    <variation>T</variation>
    <location>
        <position position="145"/>
    </location>
</feature>
<feature type="sequence conflict" description="In Ref. 4; AK315363." evidence="13" ref="4">
    <original>E</original>
    <variation>D</variation>
    <location>
        <position position="402"/>
    </location>
</feature>
<feature type="sequence conflict" description="In Ref. 5; CAG33494." evidence="13" ref="5">
    <original>C</original>
    <variation>Y</variation>
    <location>
        <position position="518"/>
    </location>
</feature>
<proteinExistence type="evidence at protein level"/>
<reference key="1">
    <citation type="journal article" date="2000" name="Mol. Biol. Cell">
        <title>A novel helicase-type protein in the nucleolus: protein NOH61.</title>
        <authorList>
            <person name="Zirwes R.F."/>
            <person name="Eilbracht J."/>
            <person name="Kneissel S."/>
            <person name="Schmidt-Zachmann M.S."/>
        </authorList>
    </citation>
    <scope>NUCLEOTIDE SEQUENCE [MRNA] (ISOFORM 1)</scope>
    <source>
        <tissue>Keratinocyte</tissue>
    </source>
</reference>
<reference key="2">
    <citation type="submission" date="2000-03" db="EMBL/GenBank/DDBJ databases">
        <title>Sequencing of a new human DEAD-box RNA helicase.</title>
        <authorList>
            <person name="Camargo A.A."/>
            <person name="Nunes D.N."/>
            <person name="Samaia H.B."/>
            <person name="Simpson A.J.G."/>
            <person name="Dias-Neto E."/>
        </authorList>
    </citation>
    <scope>NUCLEOTIDE SEQUENCE [MRNA] (ISOFORM 1)</scope>
</reference>
<reference key="3">
    <citation type="journal article" date="2001" name="Genome Res.">
        <title>Towards a catalog of human genes and proteins: sequencing and analysis of 500 novel complete protein coding human cDNAs.</title>
        <authorList>
            <person name="Wiemann S."/>
            <person name="Weil B."/>
            <person name="Wellenreuther R."/>
            <person name="Gassenhuber J."/>
            <person name="Glassl S."/>
            <person name="Ansorge W."/>
            <person name="Boecher M."/>
            <person name="Bloecker H."/>
            <person name="Bauersachs S."/>
            <person name="Blum H."/>
            <person name="Lauber J."/>
            <person name="Duesterhoeft A."/>
            <person name="Beyer A."/>
            <person name="Koehrer K."/>
            <person name="Strack N."/>
            <person name="Mewes H.-W."/>
            <person name="Ottenwaelder B."/>
            <person name="Obermaier B."/>
            <person name="Tampe J."/>
            <person name="Heubner D."/>
            <person name="Wambutt R."/>
            <person name="Korn B."/>
            <person name="Klein M."/>
            <person name="Poustka A."/>
        </authorList>
    </citation>
    <scope>NUCLEOTIDE SEQUENCE [LARGE SCALE MRNA] (ISOFORM 1)</scope>
    <source>
        <tissue>Fetal brain</tissue>
    </source>
</reference>
<reference key="4">
    <citation type="journal article" date="2004" name="Nat. Genet.">
        <title>Complete sequencing and characterization of 21,243 full-length human cDNAs.</title>
        <authorList>
            <person name="Ota T."/>
            <person name="Suzuki Y."/>
            <person name="Nishikawa T."/>
            <person name="Otsuki T."/>
            <person name="Sugiyama T."/>
            <person name="Irie R."/>
            <person name="Wakamatsu A."/>
            <person name="Hayashi K."/>
            <person name="Sato H."/>
            <person name="Nagai K."/>
            <person name="Kimura K."/>
            <person name="Makita H."/>
            <person name="Sekine M."/>
            <person name="Obayashi M."/>
            <person name="Nishi T."/>
            <person name="Shibahara T."/>
            <person name="Tanaka T."/>
            <person name="Ishii S."/>
            <person name="Yamamoto J."/>
            <person name="Saito K."/>
            <person name="Kawai Y."/>
            <person name="Isono Y."/>
            <person name="Nakamura Y."/>
            <person name="Nagahari K."/>
            <person name="Murakami K."/>
            <person name="Yasuda T."/>
            <person name="Iwayanagi T."/>
            <person name="Wagatsuma M."/>
            <person name="Shiratori A."/>
            <person name="Sudo H."/>
            <person name="Hosoiri T."/>
            <person name="Kaku Y."/>
            <person name="Kodaira H."/>
            <person name="Kondo H."/>
            <person name="Sugawara M."/>
            <person name="Takahashi M."/>
            <person name="Kanda K."/>
            <person name="Yokoi T."/>
            <person name="Furuya T."/>
            <person name="Kikkawa E."/>
            <person name="Omura Y."/>
            <person name="Abe K."/>
            <person name="Kamihara K."/>
            <person name="Katsuta N."/>
            <person name="Sato K."/>
            <person name="Tanikawa M."/>
            <person name="Yamazaki M."/>
            <person name="Ninomiya K."/>
            <person name="Ishibashi T."/>
            <person name="Yamashita H."/>
            <person name="Murakawa K."/>
            <person name="Fujimori K."/>
            <person name="Tanai H."/>
            <person name="Kimata M."/>
            <person name="Watanabe M."/>
            <person name="Hiraoka S."/>
            <person name="Chiba Y."/>
            <person name="Ishida S."/>
            <person name="Ono Y."/>
            <person name="Takiguchi S."/>
            <person name="Watanabe S."/>
            <person name="Yosida M."/>
            <person name="Hotuta T."/>
            <person name="Kusano J."/>
            <person name="Kanehori K."/>
            <person name="Takahashi-Fujii A."/>
            <person name="Hara H."/>
            <person name="Tanase T.-O."/>
            <person name="Nomura Y."/>
            <person name="Togiya S."/>
            <person name="Komai F."/>
            <person name="Hara R."/>
            <person name="Takeuchi K."/>
            <person name="Arita M."/>
            <person name="Imose N."/>
            <person name="Musashino K."/>
            <person name="Yuuki H."/>
            <person name="Oshima A."/>
            <person name="Sasaki N."/>
            <person name="Aotsuka S."/>
            <person name="Yoshikawa Y."/>
            <person name="Matsunawa H."/>
            <person name="Ichihara T."/>
            <person name="Shiohata N."/>
            <person name="Sano S."/>
            <person name="Moriya S."/>
            <person name="Momiyama H."/>
            <person name="Satoh N."/>
            <person name="Takami S."/>
            <person name="Terashima Y."/>
            <person name="Suzuki O."/>
            <person name="Nakagawa S."/>
            <person name="Senoh A."/>
            <person name="Mizoguchi H."/>
            <person name="Goto Y."/>
            <person name="Shimizu F."/>
            <person name="Wakebe H."/>
            <person name="Hishigaki H."/>
            <person name="Watanabe T."/>
            <person name="Sugiyama A."/>
            <person name="Takemoto M."/>
            <person name="Kawakami B."/>
            <person name="Yamazaki M."/>
            <person name="Watanabe K."/>
            <person name="Kumagai A."/>
            <person name="Itakura S."/>
            <person name="Fukuzumi Y."/>
            <person name="Fujimori Y."/>
            <person name="Komiyama M."/>
            <person name="Tashiro H."/>
            <person name="Tanigami A."/>
            <person name="Fujiwara T."/>
            <person name="Ono T."/>
            <person name="Yamada K."/>
            <person name="Fujii Y."/>
            <person name="Ozaki K."/>
            <person name="Hirao M."/>
            <person name="Ohmori Y."/>
            <person name="Kawabata A."/>
            <person name="Hikiji T."/>
            <person name="Kobatake N."/>
            <person name="Inagaki H."/>
            <person name="Ikema Y."/>
            <person name="Okamoto S."/>
            <person name="Okitani R."/>
            <person name="Kawakami T."/>
            <person name="Noguchi S."/>
            <person name="Itoh T."/>
            <person name="Shigeta K."/>
            <person name="Senba T."/>
            <person name="Matsumura K."/>
            <person name="Nakajima Y."/>
            <person name="Mizuno T."/>
            <person name="Morinaga M."/>
            <person name="Sasaki M."/>
            <person name="Togashi T."/>
            <person name="Oyama M."/>
            <person name="Hata H."/>
            <person name="Watanabe M."/>
            <person name="Komatsu T."/>
            <person name="Mizushima-Sugano J."/>
            <person name="Satoh T."/>
            <person name="Shirai Y."/>
            <person name="Takahashi Y."/>
            <person name="Nakagawa K."/>
            <person name="Okumura K."/>
            <person name="Nagase T."/>
            <person name="Nomura N."/>
            <person name="Kikuchi H."/>
            <person name="Masuho Y."/>
            <person name="Yamashita R."/>
            <person name="Nakai K."/>
            <person name="Yada T."/>
            <person name="Nakamura Y."/>
            <person name="Ohara O."/>
            <person name="Isogai T."/>
            <person name="Sugano S."/>
        </authorList>
    </citation>
    <scope>NUCLEOTIDE SEQUENCE [LARGE SCALE MRNA] (ISOFORMS 1 AND 2)</scope>
    <source>
        <tissue>Glial tumor</tissue>
    </source>
</reference>
<reference key="5">
    <citation type="submission" date="2004-06" db="EMBL/GenBank/DDBJ databases">
        <title>Cloning of human full open reading frames in Gateway(TM) system entry vector (pDONR201).</title>
        <authorList>
            <person name="Ebert L."/>
            <person name="Schick M."/>
            <person name="Neubert P."/>
            <person name="Schatten R."/>
            <person name="Henze S."/>
            <person name="Korn B."/>
        </authorList>
    </citation>
    <scope>NUCLEOTIDE SEQUENCE [LARGE SCALE MRNA] (ISOFORM 1)</scope>
</reference>
<reference key="6">
    <citation type="journal article" date="2003" name="Nature">
        <title>The DNA sequence of human chromosome 7.</title>
        <authorList>
            <person name="Hillier L.W."/>
            <person name="Fulton R.S."/>
            <person name="Fulton L.A."/>
            <person name="Graves T.A."/>
            <person name="Pepin K.H."/>
            <person name="Wagner-McPherson C."/>
            <person name="Layman D."/>
            <person name="Maas J."/>
            <person name="Jaeger S."/>
            <person name="Walker R."/>
            <person name="Wylie K."/>
            <person name="Sekhon M."/>
            <person name="Becker M.C."/>
            <person name="O'Laughlin M.D."/>
            <person name="Schaller M.E."/>
            <person name="Fewell G.A."/>
            <person name="Delehaunty K.D."/>
            <person name="Miner T.L."/>
            <person name="Nash W.E."/>
            <person name="Cordes M."/>
            <person name="Du H."/>
            <person name="Sun H."/>
            <person name="Edwards J."/>
            <person name="Bradshaw-Cordum H."/>
            <person name="Ali J."/>
            <person name="Andrews S."/>
            <person name="Isak A."/>
            <person name="Vanbrunt A."/>
            <person name="Nguyen C."/>
            <person name="Du F."/>
            <person name="Lamar B."/>
            <person name="Courtney L."/>
            <person name="Kalicki J."/>
            <person name="Ozersky P."/>
            <person name="Bielicki L."/>
            <person name="Scott K."/>
            <person name="Holmes A."/>
            <person name="Harkins R."/>
            <person name="Harris A."/>
            <person name="Strong C.M."/>
            <person name="Hou S."/>
            <person name="Tomlinson C."/>
            <person name="Dauphin-Kohlberg S."/>
            <person name="Kozlowicz-Reilly A."/>
            <person name="Leonard S."/>
            <person name="Rohlfing T."/>
            <person name="Rock S.M."/>
            <person name="Tin-Wollam A.-M."/>
            <person name="Abbott A."/>
            <person name="Minx P."/>
            <person name="Maupin R."/>
            <person name="Strowmatt C."/>
            <person name="Latreille P."/>
            <person name="Miller N."/>
            <person name="Johnson D."/>
            <person name="Murray J."/>
            <person name="Woessner J.P."/>
            <person name="Wendl M.C."/>
            <person name="Yang S.-P."/>
            <person name="Schultz B.R."/>
            <person name="Wallis J.W."/>
            <person name="Spieth J."/>
            <person name="Bieri T.A."/>
            <person name="Nelson J.O."/>
            <person name="Berkowicz N."/>
            <person name="Wohldmann P.E."/>
            <person name="Cook L.L."/>
            <person name="Hickenbotham M.T."/>
            <person name="Eldred J."/>
            <person name="Williams D."/>
            <person name="Bedell J.A."/>
            <person name="Mardis E.R."/>
            <person name="Clifton S.W."/>
            <person name="Chissoe S.L."/>
            <person name="Marra M.A."/>
            <person name="Raymond C."/>
            <person name="Haugen E."/>
            <person name="Gillett W."/>
            <person name="Zhou Y."/>
            <person name="James R."/>
            <person name="Phelps K."/>
            <person name="Iadanoto S."/>
            <person name="Bubb K."/>
            <person name="Simms E."/>
            <person name="Levy R."/>
            <person name="Clendenning J."/>
            <person name="Kaul R."/>
            <person name="Kent W.J."/>
            <person name="Furey T.S."/>
            <person name="Baertsch R.A."/>
            <person name="Brent M.R."/>
            <person name="Keibler E."/>
            <person name="Flicek P."/>
            <person name="Bork P."/>
            <person name="Suyama M."/>
            <person name="Bailey J.A."/>
            <person name="Portnoy M.E."/>
            <person name="Torrents D."/>
            <person name="Chinwalla A.T."/>
            <person name="Gish W.R."/>
            <person name="Eddy S.R."/>
            <person name="McPherson J.D."/>
            <person name="Olson M.V."/>
            <person name="Eichler E.E."/>
            <person name="Green E.D."/>
            <person name="Waterston R.H."/>
            <person name="Wilson R.K."/>
        </authorList>
    </citation>
    <scope>NUCLEOTIDE SEQUENCE [LARGE SCALE GENOMIC DNA]</scope>
</reference>
<reference key="7">
    <citation type="journal article" date="2003" name="Science">
        <title>Human chromosome 7: DNA sequence and biology.</title>
        <authorList>
            <person name="Scherer S.W."/>
            <person name="Cheung J."/>
            <person name="MacDonald J.R."/>
            <person name="Osborne L.R."/>
            <person name="Nakabayashi K."/>
            <person name="Herbrick J.-A."/>
            <person name="Carson A.R."/>
            <person name="Parker-Katiraee L."/>
            <person name="Skaug J."/>
            <person name="Khaja R."/>
            <person name="Zhang J."/>
            <person name="Hudek A.K."/>
            <person name="Li M."/>
            <person name="Haddad M."/>
            <person name="Duggan G.E."/>
            <person name="Fernandez B.A."/>
            <person name="Kanematsu E."/>
            <person name="Gentles S."/>
            <person name="Christopoulos C.C."/>
            <person name="Choufani S."/>
            <person name="Kwasnicka D."/>
            <person name="Zheng X.H."/>
            <person name="Lai Z."/>
            <person name="Nusskern D.R."/>
            <person name="Zhang Q."/>
            <person name="Gu Z."/>
            <person name="Lu F."/>
            <person name="Zeesman S."/>
            <person name="Nowaczyk M.J."/>
            <person name="Teshima I."/>
            <person name="Chitayat D."/>
            <person name="Shuman C."/>
            <person name="Weksberg R."/>
            <person name="Zackai E.H."/>
            <person name="Grebe T.A."/>
            <person name="Cox S.R."/>
            <person name="Kirkpatrick S.J."/>
            <person name="Rahman N."/>
            <person name="Friedman J.M."/>
            <person name="Heng H.H.Q."/>
            <person name="Pelicci P.G."/>
            <person name="Lo-Coco F."/>
            <person name="Belloni E."/>
            <person name="Shaffer L.G."/>
            <person name="Pober B."/>
            <person name="Morton C.C."/>
            <person name="Gusella J.F."/>
            <person name="Bruns G.A.P."/>
            <person name="Korf B.R."/>
            <person name="Quade B.J."/>
            <person name="Ligon A.H."/>
            <person name="Ferguson H."/>
            <person name="Higgins A.W."/>
            <person name="Leach N.T."/>
            <person name="Herrick S.R."/>
            <person name="Lemyre E."/>
            <person name="Farra C.G."/>
            <person name="Kim H.-G."/>
            <person name="Summers A.M."/>
            <person name="Gripp K.W."/>
            <person name="Roberts W."/>
            <person name="Szatmari P."/>
            <person name="Winsor E.J.T."/>
            <person name="Grzeschik K.-H."/>
            <person name="Teebi A."/>
            <person name="Minassian B.A."/>
            <person name="Kere J."/>
            <person name="Armengol L."/>
            <person name="Pujana M.A."/>
            <person name="Estivill X."/>
            <person name="Wilson M.D."/>
            <person name="Koop B.F."/>
            <person name="Tosi S."/>
            <person name="Moore G.E."/>
            <person name="Boright A.P."/>
            <person name="Zlotorynski E."/>
            <person name="Kerem B."/>
            <person name="Kroisel P.M."/>
            <person name="Petek E."/>
            <person name="Oscier D.G."/>
            <person name="Mould S.J."/>
            <person name="Doehner H."/>
            <person name="Doehner K."/>
            <person name="Rommens J.M."/>
            <person name="Vincent J.B."/>
            <person name="Venter J.C."/>
            <person name="Li P.W."/>
            <person name="Mural R.J."/>
            <person name="Adams M.D."/>
            <person name="Tsui L.-C."/>
        </authorList>
    </citation>
    <scope>NUCLEOTIDE SEQUENCE [LARGE SCALE GENOMIC DNA]</scope>
</reference>
<reference key="8">
    <citation type="submission" date="2005-09" db="EMBL/GenBank/DDBJ databases">
        <authorList>
            <person name="Mural R.J."/>
            <person name="Istrail S."/>
            <person name="Sutton G.G."/>
            <person name="Florea L."/>
            <person name="Halpern A.L."/>
            <person name="Mobarry C.M."/>
            <person name="Lippert R."/>
            <person name="Walenz B."/>
            <person name="Shatkay H."/>
            <person name="Dew I."/>
            <person name="Miller J.R."/>
            <person name="Flanigan M.J."/>
            <person name="Edwards N.J."/>
            <person name="Bolanos R."/>
            <person name="Fasulo D."/>
            <person name="Halldorsson B.V."/>
            <person name="Hannenhalli S."/>
            <person name="Turner R."/>
            <person name="Yooseph S."/>
            <person name="Lu F."/>
            <person name="Nusskern D.R."/>
            <person name="Shue B.C."/>
            <person name="Zheng X.H."/>
            <person name="Zhong F."/>
            <person name="Delcher A.L."/>
            <person name="Huson D.H."/>
            <person name="Kravitz S.A."/>
            <person name="Mouchard L."/>
            <person name="Reinert K."/>
            <person name="Remington K.A."/>
            <person name="Clark A.G."/>
            <person name="Waterman M.S."/>
            <person name="Eichler E.E."/>
            <person name="Adams M.D."/>
            <person name="Hunkapiller M.W."/>
            <person name="Myers E.W."/>
            <person name="Venter J.C."/>
        </authorList>
    </citation>
    <scope>NUCLEOTIDE SEQUENCE [LARGE SCALE GENOMIC DNA]</scope>
</reference>
<reference key="9">
    <citation type="journal article" date="2004" name="Genome Res.">
        <title>The status, quality, and expansion of the NIH full-length cDNA project: the Mammalian Gene Collection (MGC).</title>
        <authorList>
            <consortium name="The MGC Project Team"/>
        </authorList>
    </citation>
    <scope>NUCLEOTIDE SEQUENCE [LARGE SCALE MRNA] (ISOFORM 1)</scope>
    <source>
        <tissue>Cervix</tissue>
    </source>
</reference>
<reference key="10">
    <citation type="journal article" date="2002" name="Mol. Biol. Cell">
        <title>Functional proteomic analysis of human nucleolus.</title>
        <authorList>
            <person name="Scherl A."/>
            <person name="Coute Y."/>
            <person name="Deon C."/>
            <person name="Calle A."/>
            <person name="Kindbeiter K."/>
            <person name="Sanchez J.-C."/>
            <person name="Greco A."/>
            <person name="Hochstrasser D.F."/>
            <person name="Diaz J.-J."/>
        </authorList>
    </citation>
    <scope>SUBCELLULAR LOCATION [LARGE SCALE ANALYSIS]</scope>
    <source>
        <tissue>Cervix carcinoma</tissue>
    </source>
</reference>
<reference key="11">
    <citation type="journal article" date="2007" name="Science">
        <title>ATM and ATR substrate analysis reveals extensive protein networks responsive to DNA damage.</title>
        <authorList>
            <person name="Matsuoka S."/>
            <person name="Ballif B.A."/>
            <person name="Smogorzewska A."/>
            <person name="McDonald E.R. III"/>
            <person name="Hurov K.E."/>
            <person name="Luo J."/>
            <person name="Bakalarski C.E."/>
            <person name="Zhao Z."/>
            <person name="Solimini N."/>
            <person name="Lerenthal Y."/>
            <person name="Shiloh Y."/>
            <person name="Gygi S.P."/>
            <person name="Elledge S.J."/>
        </authorList>
    </citation>
    <scope>PHOSPHORYLATION [LARGE SCALE ANALYSIS] AT SER-126</scope>
    <scope>IDENTIFICATION BY MASS SPECTROMETRY [LARGE SCALE ANALYSIS]</scope>
    <source>
        <tissue>Embryonic kidney</tissue>
    </source>
</reference>
<reference key="12">
    <citation type="journal article" date="2011" name="BMC Syst. Biol.">
        <title>Initial characterization of the human central proteome.</title>
        <authorList>
            <person name="Burkard T.R."/>
            <person name="Planyavsky M."/>
            <person name="Kaupe I."/>
            <person name="Breitwieser F.P."/>
            <person name="Buerckstuemmer T."/>
            <person name="Bennett K.L."/>
            <person name="Superti-Furga G."/>
            <person name="Colinge J."/>
        </authorList>
    </citation>
    <scope>IDENTIFICATION BY MASS SPECTROMETRY [LARGE SCALE ANALYSIS]</scope>
</reference>
<reference key="13">
    <citation type="journal article" date="2012" name="Virology">
        <title>The helicase activity of DDX56 is required for its role in assembly of infectious West Nile virus particles.</title>
        <authorList>
            <person name="Xu Z."/>
            <person name="Hobman T.C."/>
        </authorList>
    </citation>
    <scope>FUNCTION (MICROBIAL INFECTION)</scope>
    <scope>INTERACTION WITH WEST NILE VIRUS CAPSID PROTEIN C (MICROBIAL INFECTION)</scope>
    <scope>SUBCELLULAR LOCATION</scope>
    <scope>MUTAGENESIS OF ASP-166 AND GLU-167</scope>
</reference>
<reference key="14">
    <citation type="journal article" date="2013" name="J. Proteome Res.">
        <title>Toward a comprehensive characterization of a human cancer cell phosphoproteome.</title>
        <authorList>
            <person name="Zhou H."/>
            <person name="Di Palma S."/>
            <person name="Preisinger C."/>
            <person name="Peng M."/>
            <person name="Polat A.N."/>
            <person name="Heck A.J."/>
            <person name="Mohammed S."/>
        </authorList>
    </citation>
    <scope>PHOSPHORYLATION [LARGE SCALE ANALYSIS] AT THR-141 AND SER-532</scope>
    <scope>IDENTIFICATION BY MASS SPECTROMETRY [LARGE SCALE ANALYSIS]</scope>
    <source>
        <tissue>Erythroleukemia</tissue>
    </source>
</reference>
<reference key="15">
    <citation type="journal article" date="2014" name="J. Proteomics">
        <title>An enzyme assisted RP-RPLC approach for in-depth analysis of human liver phosphoproteome.</title>
        <authorList>
            <person name="Bian Y."/>
            <person name="Song C."/>
            <person name="Cheng K."/>
            <person name="Dong M."/>
            <person name="Wang F."/>
            <person name="Huang J."/>
            <person name="Sun D."/>
            <person name="Wang L."/>
            <person name="Ye M."/>
            <person name="Zou H."/>
        </authorList>
    </citation>
    <scope>IDENTIFICATION BY MASS SPECTROMETRY [LARGE SCALE ANALYSIS]</scope>
    <source>
        <tissue>Liver</tissue>
    </source>
</reference>
<reference key="16">
    <citation type="journal article" date="2019" name="J. Cell Sci.">
        <title>DDX56 inhibits type I interferon by disrupting assembly of IRF3-IPO5 to inhibit IRF3 nucleus import.</title>
        <authorList>
            <person name="Li D."/>
            <person name="Fu S."/>
            <person name="Wu Z."/>
            <person name="Yang W."/>
            <person name="Ru Y."/>
            <person name="Shu H."/>
            <person name="Liu X."/>
            <person name="Zheng H."/>
        </authorList>
    </citation>
    <scope>FUNCTION</scope>
    <scope>INTERACTION WITH IRF3</scope>
    <scope>SUBCELLULAR LOCATION</scope>
    <scope>MUTAGENESIS OF ASP-166 AND GLU-167</scope>
</reference>
<reference key="17">
    <citation type="journal article" date="2019" name="Cell. Signal.">
        <title>DDX56 cooperates with FMDV 3A to enhance FMDV replication by inhibiting the phosphorylation of IRF3.</title>
        <authorList>
            <person name="Fu S.Z."/>
            <person name="Yang W.P."/>
            <person name="Ru Y."/>
            <person name="Zhang K.S."/>
            <person name="Wang Y."/>
            <person name="Liu X.T."/>
            <person name="Li D."/>
            <person name="Zheng H.X."/>
        </authorList>
    </citation>
    <scope>FUNCTION (MICROBIAL INFECTION)</scope>
    <scope>INTERACTION WITH FOOT-AND-MOUTH DISEASE VIRUS PROTEIN 3A (MICROBIAL INFECTION)</scope>
</reference>
<reference key="18">
    <citation type="journal article" date="2021" name="Cell Rep.">
        <title>The DEAD-box helicase DDX56 is a conserved stemness regulator in normal and cancer stem cells.</title>
        <authorList>
            <person name="Pryszlak M."/>
            <person name="Wiggans M."/>
            <person name="Chen X."/>
            <person name="Jaramillo J.E."/>
            <person name="Burns S.E."/>
            <person name="Richards L.M."/>
            <person name="Pugh T.J."/>
            <person name="Kaplan D.R."/>
            <person name="Huang X."/>
            <person name="Dirks P.B."/>
            <person name="Pearson B.J."/>
        </authorList>
    </citation>
    <scope>FUNCTION</scope>
    <scope>SUBCELLULAR LOCATION</scope>
</reference>
<reference key="19">
    <citation type="journal article" date="2022" name="Vet. Microbiol.">
        <title>DDX56 antagonizes IFN-beta production to enhance EMCV replication by inhibiting IRF3 nuclear translocation.</title>
        <authorList>
            <person name="Xu S."/>
            <person name="Xie J."/>
            <person name="Zhang X."/>
            <person name="Chen L."/>
            <person name="Bi Y."/>
            <person name="Li X."/>
            <person name="Idris A."/>
            <person name="Feng R."/>
        </authorList>
    </citation>
    <scope>FUNCTION (MICROBIAL INFECTION)</scope>
</reference>
<name>DDX56_HUMAN</name>